<proteinExistence type="evidence at protein level"/>
<organism>
    <name type="scientific">Helicobacter pylori</name>
    <name type="common">Campylobacter pylori</name>
    <dbReference type="NCBI Taxonomy" id="210"/>
    <lineage>
        <taxon>Bacteria</taxon>
        <taxon>Pseudomonadati</taxon>
        <taxon>Campylobacterota</taxon>
        <taxon>Epsilonproteobacteria</taxon>
        <taxon>Campylobacterales</taxon>
        <taxon>Helicobacteraceae</taxon>
        <taxon>Helicobacter</taxon>
    </lineage>
</organism>
<dbReference type="EMBL" id="U05676">
    <property type="protein sequence ID" value="AAA17657.1"/>
    <property type="molecule type" value="Unassigned_DNA"/>
</dbReference>
<dbReference type="PIR" id="B53739">
    <property type="entry name" value="B53739"/>
</dbReference>
<dbReference type="PDB" id="2QV3">
    <property type="method" value="X-ray"/>
    <property type="resolution" value="2.40 A"/>
    <property type="chains" value="A=388-844"/>
</dbReference>
<dbReference type="PDB" id="6NYF">
    <property type="method" value="EM"/>
    <property type="resolution" value="3.20 A"/>
    <property type="chains" value="A/B/C/D/E/F=34-854"/>
</dbReference>
<dbReference type="PDB" id="6NYG">
    <property type="method" value="EM"/>
    <property type="resolution" value="3.90 A"/>
    <property type="chains" value="A/B/C/D/E/F/G/H/I/J/K/L=34-854"/>
</dbReference>
<dbReference type="PDB" id="6NYJ">
    <property type="method" value="EM"/>
    <property type="resolution" value="3.20 A"/>
    <property type="chains" value="A/B/C/D/E/F/G/H/I/J/K/L=34-854"/>
</dbReference>
<dbReference type="PDB" id="6NYL">
    <property type="method" value="EM"/>
    <property type="resolution" value="3.70 A"/>
    <property type="chains" value="A/B/C/D/E/F/G/H/I/J/K/L=34-854"/>
</dbReference>
<dbReference type="PDB" id="6NYM">
    <property type="method" value="EM"/>
    <property type="resolution" value="3.60 A"/>
    <property type="chains" value="A/B/C/D/E/F/G/H/I/J/K/L=34-854"/>
</dbReference>
<dbReference type="PDB" id="6NYN">
    <property type="method" value="EM"/>
    <property type="resolution" value="3.50 A"/>
    <property type="chains" value="A/B/C/D/E/F/G/H/I/J/K/L=34-854"/>
</dbReference>
<dbReference type="PDB" id="6ODY">
    <property type="method" value="EM"/>
    <property type="resolution" value="3.80 A"/>
    <property type="chains" value="A/B/C/D/E/F=373-844"/>
</dbReference>
<dbReference type="PDBsum" id="2QV3"/>
<dbReference type="PDBsum" id="6NYF"/>
<dbReference type="PDBsum" id="6NYG"/>
<dbReference type="PDBsum" id="6NYJ"/>
<dbReference type="PDBsum" id="6NYL"/>
<dbReference type="PDBsum" id="6NYM"/>
<dbReference type="PDBsum" id="6NYN"/>
<dbReference type="PDBsum" id="6ODY"/>
<dbReference type="EMDB" id="EMD-0542"/>
<dbReference type="EMDB" id="EMD-0543"/>
<dbReference type="EMDB" id="EMD-0544"/>
<dbReference type="EMDB" id="EMD-0545"/>
<dbReference type="EMDB" id="EMD-0546"/>
<dbReference type="EMDB" id="EMD-0547"/>
<dbReference type="EMDB" id="EMD-20024"/>
<dbReference type="SMR" id="Q48245"/>
<dbReference type="DIP" id="DIP-46228N"/>
<dbReference type="TCDB" id="1.C.9.1.2">
    <property type="family name" value="the vacuolating cytotoxin (vaca) family"/>
</dbReference>
<dbReference type="ABCD" id="Q48245">
    <property type="antibodies" value="6 sequenced antibodies"/>
</dbReference>
<dbReference type="EvolutionaryTrace" id="Q48245"/>
<dbReference type="PHI-base" id="PHI:3141"/>
<dbReference type="GO" id="GO:0009279">
    <property type="term" value="C:cell outer membrane"/>
    <property type="evidence" value="ECO:0007669"/>
    <property type="project" value="UniProtKB-SubCell"/>
</dbReference>
<dbReference type="GO" id="GO:0009986">
    <property type="term" value="C:cell surface"/>
    <property type="evidence" value="ECO:0007669"/>
    <property type="project" value="UniProtKB-SubCell"/>
</dbReference>
<dbReference type="GO" id="GO:0005576">
    <property type="term" value="C:extracellular region"/>
    <property type="evidence" value="ECO:0007669"/>
    <property type="project" value="UniProtKB-SubCell"/>
</dbReference>
<dbReference type="GO" id="GO:0042597">
    <property type="term" value="C:periplasmic space"/>
    <property type="evidence" value="ECO:0007669"/>
    <property type="project" value="UniProtKB-SubCell"/>
</dbReference>
<dbReference type="GO" id="GO:0090729">
    <property type="term" value="F:toxin activity"/>
    <property type="evidence" value="ECO:0007669"/>
    <property type="project" value="UniProtKB-KW"/>
</dbReference>
<dbReference type="DisProt" id="DP03034"/>
<dbReference type="Gene3D" id="2.40.128.130">
    <property type="entry name" value="Autotransporter beta-domain"/>
    <property type="match status" value="1"/>
</dbReference>
<dbReference type="InterPro" id="IPR005546">
    <property type="entry name" value="Autotransporte_beta"/>
</dbReference>
<dbReference type="InterPro" id="IPR036709">
    <property type="entry name" value="Autotransporte_beta_dom_sf"/>
</dbReference>
<dbReference type="InterPro" id="IPR006315">
    <property type="entry name" value="OM_autotransptr_brl_dom"/>
</dbReference>
<dbReference type="InterPro" id="IPR003842">
    <property type="entry name" value="Vacuolating_cytotoxin"/>
</dbReference>
<dbReference type="NCBIfam" id="TIGR01414">
    <property type="entry name" value="autotrans_barl"/>
    <property type="match status" value="1"/>
</dbReference>
<dbReference type="Pfam" id="PF02691">
    <property type="entry name" value="VacA"/>
    <property type="match status" value="1"/>
</dbReference>
<dbReference type="PRINTS" id="PR01656">
    <property type="entry name" value="VACCYTOTOXIN"/>
</dbReference>
<dbReference type="SMART" id="SM00869">
    <property type="entry name" value="Autotransporter"/>
    <property type="match status" value="1"/>
</dbReference>
<dbReference type="SUPFAM" id="SSF103515">
    <property type="entry name" value="Autotransporter"/>
    <property type="match status" value="1"/>
</dbReference>
<dbReference type="PROSITE" id="PS51208">
    <property type="entry name" value="AUTOTRANSPORTER"/>
    <property type="match status" value="1"/>
</dbReference>
<feature type="signal peptide" evidence="5">
    <location>
        <begin position="1"/>
        <end position="33"/>
    </location>
</feature>
<feature type="chain" id="PRO_0000387588" description="Vacuolating cytotoxin">
    <location>
        <begin position="34"/>
        <end position="1287"/>
    </location>
</feature>
<feature type="chain" id="PRO_0000002716" description="Vacuolating cytotoxin autotransporter">
    <location>
        <begin position="34"/>
        <end status="unknown"/>
    </location>
</feature>
<feature type="chain" id="PRO_0000002717" description="Vacuolating cytotoxin translocator" evidence="2">
    <location>
        <begin status="unknown"/>
        <end position="1287"/>
    </location>
</feature>
<feature type="domain" description="Autotransporter" evidence="3">
    <location>
        <begin position="1014"/>
        <end position="1287"/>
    </location>
</feature>
<feature type="region of interest" description="Disordered" evidence="4">
    <location>
        <begin position="326"/>
        <end position="381"/>
    </location>
</feature>
<feature type="compositionally biased region" description="Polar residues" evidence="4">
    <location>
        <begin position="351"/>
        <end position="376"/>
    </location>
</feature>
<feature type="helix" evidence="7">
    <location>
        <begin position="63"/>
        <end position="71"/>
    </location>
</feature>
<feature type="strand" evidence="7">
    <location>
        <begin position="79"/>
        <end position="86"/>
    </location>
</feature>
<feature type="helix" evidence="7">
    <location>
        <begin position="90"/>
        <end position="92"/>
    </location>
</feature>
<feature type="turn" evidence="7">
    <location>
        <begin position="101"/>
        <end position="104"/>
    </location>
</feature>
<feature type="helix" evidence="7">
    <location>
        <begin position="105"/>
        <end position="107"/>
    </location>
</feature>
<feature type="strand" evidence="7">
    <location>
        <begin position="115"/>
        <end position="117"/>
    </location>
</feature>
<feature type="strand" evidence="7">
    <location>
        <begin position="122"/>
        <end position="128"/>
    </location>
</feature>
<feature type="strand" evidence="7">
    <location>
        <begin position="132"/>
        <end position="135"/>
    </location>
</feature>
<feature type="strand" evidence="7">
    <location>
        <begin position="156"/>
        <end position="159"/>
    </location>
</feature>
<feature type="strand" evidence="7">
    <location>
        <begin position="169"/>
        <end position="171"/>
    </location>
</feature>
<feature type="strand" evidence="7">
    <location>
        <begin position="173"/>
        <end position="175"/>
    </location>
</feature>
<feature type="strand" evidence="7">
    <location>
        <begin position="188"/>
        <end position="190"/>
    </location>
</feature>
<feature type="strand" evidence="7">
    <location>
        <begin position="201"/>
        <end position="204"/>
    </location>
</feature>
<feature type="strand" evidence="7">
    <location>
        <begin position="207"/>
        <end position="210"/>
    </location>
</feature>
<feature type="strand" evidence="7">
    <location>
        <begin position="218"/>
        <end position="222"/>
    </location>
</feature>
<feature type="strand" evidence="7">
    <location>
        <begin position="236"/>
        <end position="238"/>
    </location>
</feature>
<feature type="strand" evidence="7">
    <location>
        <begin position="242"/>
        <end position="246"/>
    </location>
</feature>
<feature type="strand" evidence="8">
    <location>
        <begin position="248"/>
        <end position="250"/>
    </location>
</feature>
<feature type="strand" evidence="7">
    <location>
        <begin position="255"/>
        <end position="260"/>
    </location>
</feature>
<feature type="strand" evidence="7">
    <location>
        <begin position="263"/>
        <end position="266"/>
    </location>
</feature>
<feature type="strand" evidence="7">
    <location>
        <begin position="288"/>
        <end position="292"/>
    </location>
</feature>
<feature type="strand" evidence="7">
    <location>
        <begin position="294"/>
        <end position="296"/>
    </location>
</feature>
<feature type="strand" evidence="9">
    <location>
        <begin position="299"/>
        <end position="303"/>
    </location>
</feature>
<feature type="strand" evidence="8">
    <location>
        <begin position="306"/>
        <end position="309"/>
    </location>
</feature>
<feature type="strand" evidence="7">
    <location>
        <begin position="312"/>
        <end position="315"/>
    </location>
</feature>
<feature type="strand" evidence="7">
    <location>
        <begin position="322"/>
        <end position="324"/>
    </location>
</feature>
<feature type="strand" evidence="7">
    <location>
        <begin position="376"/>
        <end position="378"/>
    </location>
</feature>
<feature type="strand" evidence="6">
    <location>
        <begin position="390"/>
        <end position="396"/>
    </location>
</feature>
<feature type="strand" evidence="6">
    <location>
        <begin position="411"/>
        <end position="414"/>
    </location>
</feature>
<feature type="strand" evidence="6">
    <location>
        <begin position="416"/>
        <end position="428"/>
    </location>
</feature>
<feature type="strand" evidence="6">
    <location>
        <begin position="430"/>
        <end position="435"/>
    </location>
</feature>
<feature type="strand" evidence="6">
    <location>
        <begin position="437"/>
        <end position="448"/>
    </location>
</feature>
<feature type="strand" evidence="6">
    <location>
        <begin position="452"/>
        <end position="454"/>
    </location>
</feature>
<feature type="strand" evidence="8">
    <location>
        <begin position="457"/>
        <end position="459"/>
    </location>
</feature>
<feature type="strand" evidence="6">
    <location>
        <begin position="468"/>
        <end position="475"/>
    </location>
</feature>
<feature type="turn" evidence="6">
    <location>
        <begin position="476"/>
        <end position="478"/>
    </location>
</feature>
<feature type="strand" evidence="6">
    <location>
        <begin position="482"/>
        <end position="485"/>
    </location>
</feature>
<feature type="strand" evidence="6">
    <location>
        <begin position="495"/>
        <end position="510"/>
    </location>
</feature>
<feature type="turn" evidence="7">
    <location>
        <begin position="512"/>
        <end position="514"/>
    </location>
</feature>
<feature type="strand" evidence="6">
    <location>
        <begin position="515"/>
        <end position="541"/>
    </location>
</feature>
<feature type="strand" evidence="6">
    <location>
        <begin position="543"/>
        <end position="552"/>
    </location>
</feature>
<feature type="strand" evidence="6">
    <location>
        <begin position="563"/>
        <end position="568"/>
    </location>
</feature>
<feature type="turn" evidence="6">
    <location>
        <begin position="570"/>
        <end position="572"/>
    </location>
</feature>
<feature type="strand" evidence="6">
    <location>
        <begin position="573"/>
        <end position="580"/>
    </location>
</feature>
<feature type="strand" evidence="7">
    <location>
        <begin position="585"/>
        <end position="587"/>
    </location>
</feature>
<feature type="strand" evidence="6">
    <location>
        <begin position="592"/>
        <end position="607"/>
    </location>
</feature>
<feature type="strand" evidence="6">
    <location>
        <begin position="612"/>
        <end position="631"/>
    </location>
</feature>
<feature type="strand" evidence="6">
    <location>
        <begin position="639"/>
        <end position="648"/>
    </location>
</feature>
<feature type="strand" evidence="6">
    <location>
        <begin position="653"/>
        <end position="656"/>
    </location>
</feature>
<feature type="strand" evidence="6">
    <location>
        <begin position="660"/>
        <end position="666"/>
    </location>
</feature>
<feature type="strand" evidence="6">
    <location>
        <begin position="668"/>
        <end position="672"/>
    </location>
</feature>
<feature type="strand" evidence="6">
    <location>
        <begin position="674"/>
        <end position="678"/>
    </location>
</feature>
<feature type="strand" evidence="7">
    <location>
        <begin position="680"/>
        <end position="682"/>
    </location>
</feature>
<feature type="strand" evidence="6">
    <location>
        <begin position="687"/>
        <end position="697"/>
    </location>
</feature>
<feature type="turn" evidence="6">
    <location>
        <begin position="703"/>
        <end position="705"/>
    </location>
</feature>
<feature type="strand" evidence="6">
    <location>
        <begin position="706"/>
        <end position="708"/>
    </location>
</feature>
<feature type="strand" evidence="6">
    <location>
        <begin position="711"/>
        <end position="715"/>
    </location>
</feature>
<feature type="helix" evidence="6">
    <location>
        <begin position="717"/>
        <end position="719"/>
    </location>
</feature>
<feature type="strand" evidence="6">
    <location>
        <begin position="722"/>
        <end position="730"/>
    </location>
</feature>
<feature type="strand" evidence="6">
    <location>
        <begin position="732"/>
        <end position="738"/>
    </location>
</feature>
<feature type="strand" evidence="6">
    <location>
        <begin position="742"/>
        <end position="745"/>
    </location>
</feature>
<feature type="helix" evidence="6">
    <location>
        <begin position="751"/>
        <end position="756"/>
    </location>
</feature>
<feature type="strand" evidence="6">
    <location>
        <begin position="759"/>
        <end position="763"/>
    </location>
</feature>
<feature type="strand" evidence="6">
    <location>
        <begin position="769"/>
        <end position="775"/>
    </location>
</feature>
<feature type="helix" evidence="6">
    <location>
        <begin position="776"/>
        <end position="786"/>
    </location>
</feature>
<feature type="helix" evidence="6">
    <location>
        <begin position="789"/>
        <end position="793"/>
    </location>
</feature>
<feature type="helix" evidence="6">
    <location>
        <begin position="795"/>
        <end position="801"/>
    </location>
</feature>
<feature type="strand" evidence="6">
    <location>
        <begin position="804"/>
        <end position="807"/>
    </location>
</feature>
<feature type="strand" evidence="6">
    <location>
        <begin position="811"/>
        <end position="815"/>
    </location>
</feature>
<feature type="strand" evidence="6">
    <location>
        <begin position="817"/>
        <end position="824"/>
    </location>
</feature>
<feature type="strand" evidence="7">
    <location>
        <begin position="832"/>
        <end position="835"/>
    </location>
</feature>
<feature type="strand" evidence="6">
    <location>
        <begin position="837"/>
        <end position="839"/>
    </location>
</feature>
<gene>
    <name type="primary">vacA</name>
</gene>
<protein>
    <recommendedName>
        <fullName>Vacuolating cytotoxin autotransporter</fullName>
    </recommendedName>
    <component>
        <recommendedName>
            <fullName>Vacuolating cytotoxin</fullName>
        </recommendedName>
    </component>
    <component>
        <recommendedName>
            <fullName>Vacuolating cytotoxin translocator</fullName>
        </recommendedName>
    </component>
</protein>
<keyword id="KW-0002">3D-structure</keyword>
<keyword id="KW-0998">Cell outer membrane</keyword>
<keyword id="KW-0903">Direct protein sequencing</keyword>
<keyword id="KW-0472">Membrane</keyword>
<keyword id="KW-0574">Periplasm</keyword>
<keyword id="KW-0964">Secreted</keyword>
<keyword id="KW-0732">Signal</keyword>
<keyword id="KW-0800">Toxin</keyword>
<keyword id="KW-0812">Transmembrane</keyword>
<keyword id="KW-1134">Transmembrane beta strand</keyword>
<keyword id="KW-0843">Virulence</keyword>
<evidence type="ECO:0000250" key="1"/>
<evidence type="ECO:0000255" key="2"/>
<evidence type="ECO:0000255" key="3">
    <source>
        <dbReference type="PROSITE-ProRule" id="PRU00556"/>
    </source>
</evidence>
<evidence type="ECO:0000256" key="4">
    <source>
        <dbReference type="SAM" id="MobiDB-lite"/>
    </source>
</evidence>
<evidence type="ECO:0000269" key="5">
    <source>
    </source>
</evidence>
<evidence type="ECO:0007829" key="6">
    <source>
        <dbReference type="PDB" id="2QV3"/>
    </source>
</evidence>
<evidence type="ECO:0007829" key="7">
    <source>
        <dbReference type="PDB" id="6NYF"/>
    </source>
</evidence>
<evidence type="ECO:0007829" key="8">
    <source>
        <dbReference type="PDB" id="6NYJ"/>
    </source>
</evidence>
<evidence type="ECO:0007829" key="9">
    <source>
        <dbReference type="PDB" id="6NYN"/>
    </source>
</evidence>
<name>VACA2_HELPX</name>
<reference key="1">
    <citation type="journal article" date="1994" name="J. Biol. Chem.">
        <title>Divergence of genetic sequences for the vacuolating cytotoxin among Helicobacter pylori strains.</title>
        <authorList>
            <person name="Cover T.L."/>
            <person name="Tummuru M.K."/>
            <person name="Cao P."/>
            <person name="Thompson S.A."/>
            <person name="Blaser M.J."/>
        </authorList>
    </citation>
    <scope>NUCLEOTIDE SEQUENCE [GENOMIC DNA]</scope>
    <source>
        <strain>ATCC 49503 / 60190</strain>
    </source>
</reference>
<reference key="2">
    <citation type="journal article" date="1992" name="J. Biol. Chem.">
        <title>Purification and characterization of the vacuolating toxin from Helicobacter pylori.</title>
        <authorList>
            <person name="Cover T.L."/>
            <person name="Blaser M.J."/>
        </authorList>
    </citation>
    <scope>PROTEIN SEQUENCE OF 34-56</scope>
    <scope>CHARACTERIZATION</scope>
    <source>
        <strain>ATCC 49503 / 60190</strain>
    </source>
</reference>
<comment type="function">
    <text>Induces vacuolation of eukaryotic cells. Causes ulceration and gastric lesions.</text>
</comment>
<comment type="subcellular location">
    <molecule>Vacuolating cytotoxin autotransporter</molecule>
    <subcellularLocation>
        <location evidence="1">Periplasm</location>
    </subcellularLocation>
</comment>
<comment type="subcellular location">
    <molecule>Vacuolating cytotoxin</molecule>
    <subcellularLocation>
        <location>Secreted</location>
    </subcellularLocation>
    <subcellularLocation>
        <location>Cell surface</location>
    </subcellularLocation>
</comment>
<comment type="subcellular location">
    <molecule>Vacuolating cytotoxin translocator</molecule>
    <subcellularLocation>
        <location evidence="1">Cell outer membrane</location>
        <topology evidence="1">Multi-pass membrane protein</topology>
    </subcellularLocation>
    <text evidence="1">The cleaved C-terminal fragment (autotransporter domain) is localized in the outer membrane.</text>
</comment>
<comment type="domain">
    <text evidence="1">The signal peptide, cleaved at the inner membrane, guides the autotransporter protein to the periplasmic space. Then, insertion of the C-terminal translocator domain in the outer membrane forms a hydrophilic pore for the translocation of the passenger domain to the bacterial cell surface, with subsequent cleavage (By similarity).</text>
</comment>
<sequence length="1287" mass="139041">MEIQQTHRKINRPLVSLALVGALVSITPQQSHAAFFTTVIIPAIVGGIATGTAVGTVSGLLGWGLKQAEEANKTPDKPDKVWRIQAGKGFNEFPNKEYDLYKSLLSSKIDGGWDWGNAATHYWIKGGQWNKLEVDMKDAVGTYKLSGLRNFTGGDLDVNMQKATLRLGQFNGNSFTSYKDSADRTTRVDFNAKNILIDNFLEINNRVGSGAGRKASSTVLTLQASEGITSSKNAEISLYDGATLNLASNSVKLNGNVWMGRLQYVGAYLAPSYSTINTSKVTGEVNFNHLTVGDHNAAQAGIIASNKTHIGTLDLWQSAGLNIIAPPEGGYKDKPNNTPSQSGAKNDKQESSQNNSNTQVINPPNSTQKTEVQPTQVIDGPFAGGKDTVVNIDRINTKADGTIKVGGFKASLTTNAAHLNIGKGGVNLSNQASGRTLLVENLTGNITVDGPLRVNNQVGGYALAGSSANFEFKAGVDTKNGTATFNNDISLGRFVNLKVDAHTANFKGIDTGNGGFNTLDFSGVTNKVNINKLITASTNVAVKNFNINELIVKTNGVSVGEYTHFSEDIGSQSRINTVRLETGTRSIFSGGVKFKSGEKLVIDEFYYSPWNYFDARNIKNVEITRKFASSTPENPWGTSKLMFNNLTLGQNAVMDYSQFSNLTIQGDFINNQGTINYLVRGGKVATLNVGNAAAMMFNNDIDSATGFYKPLIKINSAQDLIKNTEHVLLKAKIIGYGNVSTGTNGISNVNLEEQFKERLALYNNNNRMDTCVVRNTDDIKACGMAIGNQSMVNNPDNYKYLIGKAWKNIGISKTANGSKISVYYLGNSTPTENGGNTTNLPTNTTNNARFASYALIKNAPFAHSATPNLVAINQHDFGTIESVFELANRSKDIDTLYANSGAQGRDLLQTLLIDSHDAGYARTMIDATSANEITKQLNTATTTLNNIASLEHKTSSLQTLSLSNAMILNSRLVNLSRRHTNNIDSFAKRLQALKDQRFASLESAAEVLYQFAPKYEKPTNVWANAIGGASLNNGGNASLYGTSAGVDAYLNGQVEAIVGGFGSYGYSSFNNQANSLNSGANNTNFGVYSRIFANQHEFDFEAQGALGSDQSSLNFKSALLRDLNQSYNYLAYSAATRASYGYDFAFFRNALVLKPSVGVSYNHLGSTNFKSNSTNKVALSNGSSSQHLFNASANVEARYYYGDTSYFYMNAGVLQEFANFGSSNAVSLNTFKVNATRNPLNTHARVMMGGELKLAKEVFLNLGVVYLHNLISNIGHFASNLGMRYSF</sequence>
<accession>Q48245</accession>
<accession>Q9R5K9</accession>